<proteinExistence type="evidence at protein level"/>
<feature type="signal peptide" evidence="3">
    <location>
        <begin position="1"/>
        <end position="17"/>
    </location>
</feature>
<feature type="propeptide" id="PRO_0000455277" evidence="5">
    <location>
        <begin position="18"/>
        <end position="28"/>
    </location>
</feature>
<feature type="chain" id="PRO_5005101809" description="Cutinase" evidence="6">
    <location>
        <begin position="29"/>
        <end position="248"/>
    </location>
</feature>
<feature type="region of interest" description="Lid covering the active site of the uncomplexed enzyme" evidence="5 9 10">
    <location>
        <begin position="31"/>
        <end position="70"/>
    </location>
</feature>
<feature type="active site" description="Nucleophile" evidence="5 11">
    <location>
        <position position="164"/>
    </location>
</feature>
<feature type="active site" evidence="1">
    <location>
        <position position="216"/>
    </location>
</feature>
<feature type="active site" description="Proton donor/acceptor" evidence="1">
    <location>
        <position position="229"/>
    </location>
</feature>
<feature type="site" description="Transition state stabilizer" evidence="5 11">
    <location>
        <position position="90"/>
    </location>
</feature>
<feature type="site" description="Transition state stabilizer" evidence="5 11">
    <location>
        <position position="165"/>
    </location>
</feature>
<feature type="disulfide bond" evidence="5 9 10 11">
    <location>
        <begin position="55"/>
        <end position="91"/>
    </location>
</feature>
<feature type="disulfide bond" evidence="5 9 10 11">
    <location>
        <begin position="79"/>
        <end position="153"/>
    </location>
</feature>
<feature type="disulfide bond" evidence="5 9 10 11">
    <location>
        <begin position="212"/>
        <end position="219"/>
    </location>
</feature>
<feature type="strand" evidence="12">
    <location>
        <begin position="48"/>
        <end position="50"/>
    </location>
</feature>
<feature type="helix" evidence="12">
    <location>
        <begin position="51"/>
        <end position="69"/>
    </location>
</feature>
<feature type="strand" evidence="12">
    <location>
        <begin position="81"/>
        <end position="87"/>
    </location>
</feature>
<feature type="turn" evidence="12">
    <location>
        <begin position="94"/>
        <end position="100"/>
    </location>
</feature>
<feature type="helix" evidence="12">
    <location>
        <begin position="101"/>
        <end position="112"/>
    </location>
</feature>
<feature type="strand" evidence="12">
    <location>
        <begin position="117"/>
        <end position="121"/>
    </location>
</feature>
<feature type="helix" evidence="12">
    <location>
        <begin position="128"/>
        <end position="133"/>
    </location>
</feature>
<feature type="helix" evidence="12">
    <location>
        <begin position="136"/>
        <end position="152"/>
    </location>
</feature>
<feature type="strand" evidence="12">
    <location>
        <begin position="156"/>
        <end position="163"/>
    </location>
</feature>
<feature type="helix" evidence="12">
    <location>
        <begin position="165"/>
        <end position="175"/>
    </location>
</feature>
<feature type="helix" evidence="12">
    <location>
        <begin position="179"/>
        <end position="183"/>
    </location>
</feature>
<feature type="strand" evidence="12">
    <location>
        <begin position="185"/>
        <end position="192"/>
    </location>
</feature>
<feature type="turn" evidence="12">
    <location>
        <begin position="194"/>
        <end position="197"/>
    </location>
</feature>
<feature type="helix" evidence="12">
    <location>
        <begin position="205"/>
        <end position="207"/>
    </location>
</feature>
<feature type="strand" evidence="12">
    <location>
        <begin position="208"/>
        <end position="211"/>
    </location>
</feature>
<feature type="helix" evidence="12">
    <location>
        <begin position="217"/>
        <end position="220"/>
    </location>
</feature>
<feature type="helix" evidence="12">
    <location>
        <begin position="227"/>
        <end position="230"/>
    </location>
</feature>
<feature type="helix" evidence="12">
    <location>
        <begin position="232"/>
        <end position="235"/>
    </location>
</feature>
<feature type="helix" evidence="12">
    <location>
        <begin position="236"/>
        <end position="246"/>
    </location>
</feature>
<evidence type="ECO:0000250" key="1">
    <source>
        <dbReference type="UniProtKB" id="P00590"/>
    </source>
</evidence>
<evidence type="ECO:0000250" key="2">
    <source>
        <dbReference type="UniProtKB" id="P11373"/>
    </source>
</evidence>
<evidence type="ECO:0000255" key="3"/>
<evidence type="ECO:0000255" key="4">
    <source>
        <dbReference type="RuleBase" id="RU361263"/>
    </source>
</evidence>
<evidence type="ECO:0000269" key="5">
    <source>
    </source>
</evidence>
<evidence type="ECO:0000305" key="6"/>
<evidence type="ECO:0000312" key="7">
    <source>
        <dbReference type="EMBL" id="ETS02914.1"/>
    </source>
</evidence>
<evidence type="ECO:0000312" key="8">
    <source>
        <dbReference type="Proteomes" id="UP000024376"/>
    </source>
</evidence>
<evidence type="ECO:0007744" key="9">
    <source>
        <dbReference type="PDB" id="4PSC"/>
    </source>
</evidence>
<evidence type="ECO:0007744" key="10">
    <source>
        <dbReference type="PDB" id="4PSD"/>
    </source>
</evidence>
<evidence type="ECO:0007744" key="11">
    <source>
        <dbReference type="PDB" id="4PSE"/>
    </source>
</evidence>
<evidence type="ECO:0007829" key="12">
    <source>
        <dbReference type="PDB" id="4PSC"/>
    </source>
</evidence>
<name>CUTI1_HYPJR</name>
<gene>
    <name evidence="7" type="ORF">M419DRAFT_76732</name>
</gene>
<keyword id="KW-0002">3D-structure</keyword>
<keyword id="KW-1015">Disulfide bond</keyword>
<keyword id="KW-0378">Hydrolase</keyword>
<keyword id="KW-0964">Secreted</keyword>
<keyword id="KW-0719">Serine esterase</keyword>
<keyword id="KW-0732">Signal</keyword>
<protein>
    <recommendedName>
        <fullName evidence="4">Cutinase</fullName>
        <ecNumber evidence="4 5">3.1.1.74</ecNumber>
    </recommendedName>
</protein>
<comment type="function">
    <text evidence="5">Catalyzes the hydrolysis of complex carboxylic polyesters found in the cell wall of plants (PubMed:25219509). Degrades cutin, a macromolecule that forms the structure of the plant cuticle (PubMed:25219509).</text>
</comment>
<comment type="catalytic activity">
    <reaction evidence="5">
        <text>cutin + H2O = cutin monomers.</text>
        <dbReference type="EC" id="3.1.1.74"/>
    </reaction>
</comment>
<comment type="activity regulation">
    <text evidence="5">Weakly inhibited by n-undecyl phosphonate (C11Y4) (PubMed:25219509). Activity unaffected by paraoxon (PubMed:25219509).</text>
</comment>
<comment type="biophysicochemical properties">
    <phDependence>
        <text evidence="5">Optimum pH is 4-7.</text>
    </phDependence>
</comment>
<comment type="subcellular location">
    <subcellularLocation>
        <location evidence="4">Secreted</location>
    </subcellularLocation>
</comment>
<comment type="domain">
    <text evidence="5">In contract to classical cutinases, possesses a lid formed by two N-terminal helices which covers its active site (PubMed:25219509). The lid opens in the presence of surfactants to uncover the catalytic crevice, allowing enzyme activity and inhibition (PubMed:25219509).</text>
</comment>
<comment type="PTM">
    <text evidence="2">The 2 disulfide bonds play a critical role in holding the catalytic residues in juxta-position; reduction of the disulfide bridges results in the complete inactivation of the enzyme.</text>
</comment>
<comment type="mass spectrometry" mass="23748.0" method="MALDI" evidence="5"/>
<comment type="similarity">
    <text evidence="4">Belongs to the cutinase family.</text>
</comment>
<accession>A0A024SC78</accession>
<sequence length="248" mass="25924">MRSLAILTTLLAGHAFAYPKPAPQSVNRRDWPSINEFLSELAKVMPIGDTITAACDLISDGEDAAASLFGISETENDPCGDVTVLFARGTCDPGNVGVLVGPWFFDSLQTALGSRTLGVKGVPYPASVQDFLSGSVQNGINMANQIKSVLQSCPNTKLVLGGYSQGSMVVHNAASNLDAATMSKISAVVLFGDPYYGKPVANFDAAKTLVVCHDGDNICQGGDIILLPHLTYAEDADTAAAFVVPLVS</sequence>
<organism evidence="8">
    <name type="scientific">Hypocrea jecorina (strain ATCC 56765 / BCRC 32924 / NRRL 11460 / Rut C-30)</name>
    <name type="common">Trichoderma reesei</name>
    <dbReference type="NCBI Taxonomy" id="1344414"/>
    <lineage>
        <taxon>Eukaryota</taxon>
        <taxon>Fungi</taxon>
        <taxon>Dikarya</taxon>
        <taxon>Ascomycota</taxon>
        <taxon>Pezizomycotina</taxon>
        <taxon>Sordariomycetes</taxon>
        <taxon>Hypocreomycetidae</taxon>
        <taxon>Hypocreales</taxon>
        <taxon>Hypocreaceae</taxon>
        <taxon>Trichoderma</taxon>
    </lineage>
</organism>
<dbReference type="EC" id="3.1.1.74" evidence="4 5"/>
<dbReference type="EMBL" id="KI911144">
    <property type="protein sequence ID" value="ETS02914.1"/>
    <property type="molecule type" value="Genomic_DNA"/>
</dbReference>
<dbReference type="PDB" id="4PSC">
    <property type="method" value="X-ray"/>
    <property type="resolution" value="1.15 A"/>
    <property type="chains" value="A=1-204"/>
</dbReference>
<dbReference type="PDB" id="4PSD">
    <property type="method" value="X-ray"/>
    <property type="resolution" value="1.52 A"/>
    <property type="chains" value="A=1-204"/>
</dbReference>
<dbReference type="PDB" id="4PSE">
    <property type="method" value="X-ray"/>
    <property type="resolution" value="1.71 A"/>
    <property type="chains" value="A/B=1-204"/>
</dbReference>
<dbReference type="PDBsum" id="4PSC"/>
<dbReference type="PDBsum" id="4PSD"/>
<dbReference type="PDBsum" id="4PSE"/>
<dbReference type="SMR" id="A0A024SC78"/>
<dbReference type="ESTHER" id="hypjq-g0rh85">
    <property type="family name" value="Cutinase"/>
</dbReference>
<dbReference type="KEGG" id="trr:M419DRAFT_76732"/>
<dbReference type="HOGENOM" id="CLU_040058_2_1_1"/>
<dbReference type="OrthoDB" id="10458at5129"/>
<dbReference type="EvolutionaryTrace" id="A0A024SC78"/>
<dbReference type="Proteomes" id="UP000024376">
    <property type="component" value="Unassembled WGS sequence"/>
</dbReference>
<dbReference type="GO" id="GO:0005576">
    <property type="term" value="C:extracellular region"/>
    <property type="evidence" value="ECO:0007669"/>
    <property type="project" value="UniProtKB-SubCell"/>
</dbReference>
<dbReference type="GO" id="GO:0050525">
    <property type="term" value="F:cutinase activity"/>
    <property type="evidence" value="ECO:0000314"/>
    <property type="project" value="UniProtKB"/>
</dbReference>
<dbReference type="GO" id="GO:0016052">
    <property type="term" value="P:carbohydrate catabolic process"/>
    <property type="evidence" value="ECO:0007669"/>
    <property type="project" value="TreeGrafter"/>
</dbReference>
<dbReference type="Gene3D" id="3.40.50.1820">
    <property type="entry name" value="alpha/beta hydrolase"/>
    <property type="match status" value="1"/>
</dbReference>
<dbReference type="InterPro" id="IPR029058">
    <property type="entry name" value="AB_hydrolase_fold"/>
</dbReference>
<dbReference type="InterPro" id="IPR000675">
    <property type="entry name" value="Cutinase/axe"/>
</dbReference>
<dbReference type="InterPro" id="IPR043580">
    <property type="entry name" value="CUTINASE_1"/>
</dbReference>
<dbReference type="InterPro" id="IPR043579">
    <property type="entry name" value="CUTINASE_2"/>
</dbReference>
<dbReference type="InterPro" id="IPR011150">
    <property type="entry name" value="Cutinase_monf"/>
</dbReference>
<dbReference type="PANTHER" id="PTHR48250:SF1">
    <property type="entry name" value="CUTINASE"/>
    <property type="match status" value="1"/>
</dbReference>
<dbReference type="PANTHER" id="PTHR48250">
    <property type="entry name" value="CUTINASE 2-RELATED"/>
    <property type="match status" value="1"/>
</dbReference>
<dbReference type="Pfam" id="PF01083">
    <property type="entry name" value="Cutinase"/>
    <property type="match status" value="1"/>
</dbReference>
<dbReference type="PRINTS" id="PR00129">
    <property type="entry name" value="CUTINASE"/>
</dbReference>
<dbReference type="SMART" id="SM01110">
    <property type="entry name" value="Cutinase"/>
    <property type="match status" value="1"/>
</dbReference>
<dbReference type="SUPFAM" id="SSF53474">
    <property type="entry name" value="alpha/beta-Hydrolases"/>
    <property type="match status" value="1"/>
</dbReference>
<dbReference type="PROSITE" id="PS00155">
    <property type="entry name" value="CUTINASE_1"/>
    <property type="match status" value="1"/>
</dbReference>
<dbReference type="PROSITE" id="PS00931">
    <property type="entry name" value="CUTINASE_2"/>
    <property type="match status" value="1"/>
</dbReference>
<reference evidence="8" key="1">
    <citation type="journal article" date="2013" name="Ind. Biotechnol.">
        <title>Comparative genomics analysis of Trichoderma reesei strains.</title>
        <authorList>
            <person name="Koike H."/>
            <person name="Aerts A."/>
            <person name="LaButti K."/>
            <person name="Grigoriev I.V."/>
            <person name="Baker S.E."/>
        </authorList>
    </citation>
    <scope>NUCLEOTIDE SEQUENCE [LARGE SCALE GENOMIC DNA]</scope>
    <source>
        <strain evidence="8">ATCC 56765 / BCRC 32924 / NRRL 11460 / Rut C-30</strain>
    </source>
</reference>
<reference evidence="9 10 11" key="2">
    <citation type="journal article" date="2014" name="J. Mol. Biol.">
        <title>A Cutinase from Trichoderma reesei with a lid-covered active site and kinetic properties of true lipases.</title>
        <authorList>
            <person name="Roussel A."/>
            <person name="Amara S."/>
            <person name="Nyyssola A."/>
            <person name="Mateos-Diaz E."/>
            <person name="Blangy S."/>
            <person name="Kontkanen H."/>
            <person name="Westerholm-Parvinen A."/>
            <person name="Carriere F."/>
            <person name="Cambillau C."/>
        </authorList>
    </citation>
    <scope>X-RAY CRYSTALLOGRAPHY (1.15 ANGSTROMS) OF 31-248</scope>
    <scope>FUNCTION</scope>
    <scope>CATALYTIC ACTIVITY</scope>
    <scope>ACTIVITY REGULATION</scope>
    <scope>BIOPHYSICOCHEMICAL PROPERTIES</scope>
    <scope>DOMAIN</scope>
    <scope>MASS SPECTROMETRY</scope>
    <scope>ACTIVE SITE</scope>
    <scope>DISULFIDE BONDS</scope>
</reference>